<comment type="function">
    <text evidence="1">Catalyzes the reversible conversion of 3-phosphohydroxypyruvate to phosphoserine and of 3-hydroxy-2-oxo-4-phosphonooxybutanoate to phosphohydroxythreonine.</text>
</comment>
<comment type="catalytic activity">
    <reaction evidence="1">
        <text>O-phospho-L-serine + 2-oxoglutarate = 3-phosphooxypyruvate + L-glutamate</text>
        <dbReference type="Rhea" id="RHEA:14329"/>
        <dbReference type="ChEBI" id="CHEBI:16810"/>
        <dbReference type="ChEBI" id="CHEBI:18110"/>
        <dbReference type="ChEBI" id="CHEBI:29985"/>
        <dbReference type="ChEBI" id="CHEBI:57524"/>
        <dbReference type="EC" id="2.6.1.52"/>
    </reaction>
</comment>
<comment type="catalytic activity">
    <reaction evidence="1">
        <text>4-(phosphooxy)-L-threonine + 2-oxoglutarate = (R)-3-hydroxy-2-oxo-4-phosphooxybutanoate + L-glutamate</text>
        <dbReference type="Rhea" id="RHEA:16573"/>
        <dbReference type="ChEBI" id="CHEBI:16810"/>
        <dbReference type="ChEBI" id="CHEBI:29985"/>
        <dbReference type="ChEBI" id="CHEBI:58452"/>
        <dbReference type="ChEBI" id="CHEBI:58538"/>
        <dbReference type="EC" id="2.6.1.52"/>
    </reaction>
</comment>
<comment type="cofactor">
    <cofactor evidence="1">
        <name>pyridoxal 5'-phosphate</name>
        <dbReference type="ChEBI" id="CHEBI:597326"/>
    </cofactor>
    <text evidence="1">Binds 1 pyridoxal phosphate per subunit.</text>
</comment>
<comment type="pathway">
    <text evidence="1">Amino-acid biosynthesis; L-serine biosynthesis; L-serine from 3-phospho-D-glycerate: step 2/3.</text>
</comment>
<comment type="pathway">
    <text evidence="1">Cofactor biosynthesis; pyridoxine 5'-phosphate biosynthesis; pyridoxine 5'-phosphate from D-erythrose 4-phosphate: step 3/5.</text>
</comment>
<comment type="subunit">
    <text evidence="1">Homodimer.</text>
</comment>
<comment type="subcellular location">
    <subcellularLocation>
        <location evidence="1">Cytoplasm</location>
    </subcellularLocation>
</comment>
<comment type="similarity">
    <text evidence="1">Belongs to the class-V pyridoxal-phosphate-dependent aminotransferase family. SerC subfamily.</text>
</comment>
<reference key="1">
    <citation type="journal article" date="2000" name="Nature">
        <title>Complete genome sequence of Pseudomonas aeruginosa PAO1, an opportunistic pathogen.</title>
        <authorList>
            <person name="Stover C.K."/>
            <person name="Pham X.-Q.T."/>
            <person name="Erwin A.L."/>
            <person name="Mizoguchi S.D."/>
            <person name="Warrener P."/>
            <person name="Hickey M.J."/>
            <person name="Brinkman F.S.L."/>
            <person name="Hufnagle W.O."/>
            <person name="Kowalik D.J."/>
            <person name="Lagrou M."/>
            <person name="Garber R.L."/>
            <person name="Goltry L."/>
            <person name="Tolentino E."/>
            <person name="Westbrock-Wadman S."/>
            <person name="Yuan Y."/>
            <person name="Brody L.L."/>
            <person name="Coulter S.N."/>
            <person name="Folger K.R."/>
            <person name="Kas A."/>
            <person name="Larbig K."/>
            <person name="Lim R.M."/>
            <person name="Smith K.A."/>
            <person name="Spencer D.H."/>
            <person name="Wong G.K.-S."/>
            <person name="Wu Z."/>
            <person name="Paulsen I.T."/>
            <person name="Reizer J."/>
            <person name="Saier M.H. Jr."/>
            <person name="Hancock R.E.W."/>
            <person name="Lory S."/>
            <person name="Olson M.V."/>
        </authorList>
    </citation>
    <scope>NUCLEOTIDE SEQUENCE [LARGE SCALE GENOMIC DNA]</scope>
    <source>
        <strain>ATCC 15692 / DSM 22644 / CIP 104116 / JCM 14847 / LMG 12228 / 1C / PRS 101 / PAO1</strain>
    </source>
</reference>
<organism>
    <name type="scientific">Pseudomonas aeruginosa (strain ATCC 15692 / DSM 22644 / CIP 104116 / JCM 14847 / LMG 12228 / 1C / PRS 101 / PAO1)</name>
    <dbReference type="NCBI Taxonomy" id="208964"/>
    <lineage>
        <taxon>Bacteria</taxon>
        <taxon>Pseudomonadati</taxon>
        <taxon>Pseudomonadota</taxon>
        <taxon>Gammaproteobacteria</taxon>
        <taxon>Pseudomonadales</taxon>
        <taxon>Pseudomonadaceae</taxon>
        <taxon>Pseudomonas</taxon>
    </lineage>
</organism>
<accession>Q9HZ66</accession>
<evidence type="ECO:0000255" key="1">
    <source>
        <dbReference type="HAMAP-Rule" id="MF_00160"/>
    </source>
</evidence>
<evidence type="ECO:0007829" key="2">
    <source>
        <dbReference type="PDB" id="4XK1"/>
    </source>
</evidence>
<dbReference type="EC" id="2.6.1.52" evidence="1"/>
<dbReference type="EMBL" id="AE004091">
    <property type="protein sequence ID" value="AAG06555.1"/>
    <property type="molecule type" value="Genomic_DNA"/>
</dbReference>
<dbReference type="PIR" id="H83250">
    <property type="entry name" value="H83250"/>
</dbReference>
<dbReference type="RefSeq" id="NP_251857.1">
    <property type="nucleotide sequence ID" value="NC_002516.2"/>
</dbReference>
<dbReference type="RefSeq" id="WP_003106701.1">
    <property type="nucleotide sequence ID" value="NZ_QZGE01000023.1"/>
</dbReference>
<dbReference type="PDB" id="4XK1">
    <property type="method" value="X-ray"/>
    <property type="resolution" value="2.15 A"/>
    <property type="chains" value="A/B=1-361"/>
</dbReference>
<dbReference type="PDBsum" id="4XK1"/>
<dbReference type="SMR" id="Q9HZ66"/>
<dbReference type="FunCoup" id="Q9HZ66">
    <property type="interactions" value="622"/>
</dbReference>
<dbReference type="STRING" id="208964.PA3167"/>
<dbReference type="PaxDb" id="208964-PA3167"/>
<dbReference type="DNASU" id="882700"/>
<dbReference type="GeneID" id="882700"/>
<dbReference type="KEGG" id="pae:PA3167"/>
<dbReference type="PATRIC" id="fig|208964.12.peg.3310"/>
<dbReference type="PseudoCAP" id="PA3167"/>
<dbReference type="HOGENOM" id="CLU_034866_0_2_6"/>
<dbReference type="InParanoid" id="Q9HZ66"/>
<dbReference type="OrthoDB" id="9809412at2"/>
<dbReference type="PhylomeDB" id="Q9HZ66"/>
<dbReference type="BioCyc" id="PAER208964:G1FZ6-3227-MONOMER"/>
<dbReference type="UniPathway" id="UPA00135">
    <property type="reaction ID" value="UER00197"/>
</dbReference>
<dbReference type="UniPathway" id="UPA00244">
    <property type="reaction ID" value="UER00311"/>
</dbReference>
<dbReference type="EvolutionaryTrace" id="Q9HZ66"/>
<dbReference type="Proteomes" id="UP000002438">
    <property type="component" value="Chromosome"/>
</dbReference>
<dbReference type="GO" id="GO:0005737">
    <property type="term" value="C:cytoplasm"/>
    <property type="evidence" value="ECO:0000318"/>
    <property type="project" value="GO_Central"/>
</dbReference>
<dbReference type="GO" id="GO:0004648">
    <property type="term" value="F:O-phospho-L-serine:2-oxoglutarate aminotransferase activity"/>
    <property type="evidence" value="ECO:0000318"/>
    <property type="project" value="GO_Central"/>
</dbReference>
<dbReference type="GO" id="GO:0030170">
    <property type="term" value="F:pyridoxal phosphate binding"/>
    <property type="evidence" value="ECO:0000318"/>
    <property type="project" value="GO_Central"/>
</dbReference>
<dbReference type="GO" id="GO:0006564">
    <property type="term" value="P:L-serine biosynthetic process"/>
    <property type="evidence" value="ECO:0000318"/>
    <property type="project" value="GO_Central"/>
</dbReference>
<dbReference type="GO" id="GO:0008615">
    <property type="term" value="P:pyridoxine biosynthetic process"/>
    <property type="evidence" value="ECO:0007669"/>
    <property type="project" value="UniProtKB-UniRule"/>
</dbReference>
<dbReference type="CDD" id="cd00611">
    <property type="entry name" value="PSAT_like"/>
    <property type="match status" value="1"/>
</dbReference>
<dbReference type="FunFam" id="3.40.640.10:FF:000010">
    <property type="entry name" value="Phosphoserine aminotransferase"/>
    <property type="match status" value="1"/>
</dbReference>
<dbReference type="FunFam" id="3.90.1150.10:FF:000006">
    <property type="entry name" value="Phosphoserine aminotransferase"/>
    <property type="match status" value="1"/>
</dbReference>
<dbReference type="Gene3D" id="3.90.1150.10">
    <property type="entry name" value="Aspartate Aminotransferase, domain 1"/>
    <property type="match status" value="1"/>
</dbReference>
<dbReference type="Gene3D" id="3.40.640.10">
    <property type="entry name" value="Type I PLP-dependent aspartate aminotransferase-like (Major domain)"/>
    <property type="match status" value="1"/>
</dbReference>
<dbReference type="HAMAP" id="MF_00160">
    <property type="entry name" value="SerC_aminotrans_5"/>
    <property type="match status" value="1"/>
</dbReference>
<dbReference type="InterPro" id="IPR000192">
    <property type="entry name" value="Aminotrans_V_dom"/>
</dbReference>
<dbReference type="InterPro" id="IPR022278">
    <property type="entry name" value="Pser_aminoTfrase"/>
</dbReference>
<dbReference type="InterPro" id="IPR015424">
    <property type="entry name" value="PyrdxlP-dep_Trfase"/>
</dbReference>
<dbReference type="InterPro" id="IPR015421">
    <property type="entry name" value="PyrdxlP-dep_Trfase_major"/>
</dbReference>
<dbReference type="InterPro" id="IPR015422">
    <property type="entry name" value="PyrdxlP-dep_Trfase_small"/>
</dbReference>
<dbReference type="NCBIfam" id="NF003764">
    <property type="entry name" value="PRK05355.1"/>
    <property type="match status" value="1"/>
</dbReference>
<dbReference type="NCBIfam" id="TIGR01364">
    <property type="entry name" value="serC_1"/>
    <property type="match status" value="1"/>
</dbReference>
<dbReference type="PANTHER" id="PTHR43247">
    <property type="entry name" value="PHOSPHOSERINE AMINOTRANSFERASE"/>
    <property type="match status" value="1"/>
</dbReference>
<dbReference type="PANTHER" id="PTHR43247:SF1">
    <property type="entry name" value="PHOSPHOSERINE AMINOTRANSFERASE"/>
    <property type="match status" value="1"/>
</dbReference>
<dbReference type="Pfam" id="PF00266">
    <property type="entry name" value="Aminotran_5"/>
    <property type="match status" value="1"/>
</dbReference>
<dbReference type="PIRSF" id="PIRSF000525">
    <property type="entry name" value="SerC"/>
    <property type="match status" value="1"/>
</dbReference>
<dbReference type="SUPFAM" id="SSF53383">
    <property type="entry name" value="PLP-dependent transferases"/>
    <property type="match status" value="1"/>
</dbReference>
<keyword id="KW-0002">3D-structure</keyword>
<keyword id="KW-0028">Amino-acid biosynthesis</keyword>
<keyword id="KW-0032">Aminotransferase</keyword>
<keyword id="KW-0963">Cytoplasm</keyword>
<keyword id="KW-0663">Pyridoxal phosphate</keyword>
<keyword id="KW-0664">Pyridoxine biosynthesis</keyword>
<keyword id="KW-1185">Reference proteome</keyword>
<keyword id="KW-0718">Serine biosynthesis</keyword>
<keyword id="KW-0808">Transferase</keyword>
<sequence length="361" mass="39949">MSKRAFNFCAGPAALPDAVLQRAQAELLDWRGKGLSVMEMSHRSDDYVAIASKAEQDLRDLLDIPSDYKVLFLQGGASQQFAEIPLNLLPEDGVADYIDTGIWSKKAIEEARRYGTVNVAASAKEYDYFAIPGQNEWTLTKDAAYVHYASNETIGGLEFDWIPETGDVPLVTDMSSDILSRPLDVSRFGLIYAGAQKNIGPSGLVVVIVREDLLGRARSVCPTMLNYKTAADNGSMYNTPATYSWYLSGLVFEWLKEQGGVTAMEQRNRAKKDLLYKTIDASDFYTNPIQPSARSWMNVPFRLADERLDKPFLEGAEARGLLNLKGHRSVGGMRASIYNALGLDAVEALVAYMAEFEKEHG</sequence>
<feature type="chain" id="PRO_0000150198" description="Phosphoserine aminotransferase">
    <location>
        <begin position="1"/>
        <end position="361"/>
    </location>
</feature>
<feature type="binding site" evidence="1">
    <location>
        <position position="43"/>
    </location>
    <ligand>
        <name>L-glutamate</name>
        <dbReference type="ChEBI" id="CHEBI:29985"/>
    </ligand>
</feature>
<feature type="binding site" evidence="1">
    <location>
        <begin position="77"/>
        <end position="78"/>
    </location>
    <ligand>
        <name>pyridoxal 5'-phosphate</name>
        <dbReference type="ChEBI" id="CHEBI:597326"/>
    </ligand>
</feature>
<feature type="binding site" evidence="1">
    <location>
        <position position="103"/>
    </location>
    <ligand>
        <name>pyridoxal 5'-phosphate</name>
        <dbReference type="ChEBI" id="CHEBI:597326"/>
    </ligand>
</feature>
<feature type="binding site" evidence="1">
    <location>
        <position position="153"/>
    </location>
    <ligand>
        <name>pyridoxal 5'-phosphate</name>
        <dbReference type="ChEBI" id="CHEBI:597326"/>
    </ligand>
</feature>
<feature type="binding site" evidence="1">
    <location>
        <position position="173"/>
    </location>
    <ligand>
        <name>pyridoxal 5'-phosphate</name>
        <dbReference type="ChEBI" id="CHEBI:597326"/>
    </ligand>
</feature>
<feature type="binding site" evidence="1">
    <location>
        <position position="196"/>
    </location>
    <ligand>
        <name>pyridoxal 5'-phosphate</name>
        <dbReference type="ChEBI" id="CHEBI:597326"/>
    </ligand>
</feature>
<feature type="binding site" evidence="1">
    <location>
        <begin position="238"/>
        <end position="239"/>
    </location>
    <ligand>
        <name>pyridoxal 5'-phosphate</name>
        <dbReference type="ChEBI" id="CHEBI:597326"/>
    </ligand>
</feature>
<feature type="modified residue" description="N6-(pyridoxal phosphate)lysine" evidence="1">
    <location>
        <position position="197"/>
    </location>
</feature>
<feature type="strand" evidence="2">
    <location>
        <begin position="10"/>
        <end position="12"/>
    </location>
</feature>
<feature type="helix" evidence="2">
    <location>
        <begin position="17"/>
        <end position="25"/>
    </location>
</feature>
<feature type="strand" evidence="2">
    <location>
        <begin position="27"/>
        <end position="29"/>
    </location>
</feature>
<feature type="helix" evidence="2">
    <location>
        <begin position="30"/>
        <end position="32"/>
    </location>
</feature>
<feature type="helix" evidence="2">
    <location>
        <begin position="37"/>
        <end position="39"/>
    </location>
</feature>
<feature type="helix" evidence="2">
    <location>
        <begin position="45"/>
        <end position="62"/>
    </location>
</feature>
<feature type="strand" evidence="2">
    <location>
        <begin position="68"/>
        <end position="73"/>
    </location>
</feature>
<feature type="helix" evidence="2">
    <location>
        <begin position="76"/>
        <end position="88"/>
    </location>
</feature>
<feature type="strand" evidence="2">
    <location>
        <begin position="94"/>
        <end position="99"/>
    </location>
</feature>
<feature type="helix" evidence="2">
    <location>
        <begin position="102"/>
        <end position="111"/>
    </location>
</feature>
<feature type="turn" evidence="2">
    <location>
        <begin position="112"/>
        <end position="114"/>
    </location>
</feature>
<feature type="strand" evidence="2">
    <location>
        <begin position="115"/>
        <end position="122"/>
    </location>
</feature>
<feature type="helix" evidence="2">
    <location>
        <begin position="123"/>
        <end position="126"/>
    </location>
</feature>
<feature type="helix" evidence="2">
    <location>
        <begin position="134"/>
        <end position="136"/>
    </location>
</feature>
<feature type="strand" evidence="2">
    <location>
        <begin position="146"/>
        <end position="152"/>
    </location>
</feature>
<feature type="turn" evidence="2">
    <location>
        <begin position="153"/>
        <end position="156"/>
    </location>
</feature>
<feature type="strand" evidence="2">
    <location>
        <begin position="170"/>
        <end position="173"/>
    </location>
</feature>
<feature type="turn" evidence="2">
    <location>
        <begin position="175"/>
        <end position="179"/>
    </location>
</feature>
<feature type="helix" evidence="2">
    <location>
        <begin position="185"/>
        <end position="187"/>
    </location>
</feature>
<feature type="strand" evidence="2">
    <location>
        <begin position="189"/>
        <end position="194"/>
    </location>
</feature>
<feature type="strand" evidence="2">
    <location>
        <begin position="205"/>
        <end position="210"/>
    </location>
</feature>
<feature type="helix" evidence="2">
    <location>
        <begin position="211"/>
        <end position="213"/>
    </location>
</feature>
<feature type="helix" evidence="2">
    <location>
        <begin position="223"/>
        <end position="225"/>
    </location>
</feature>
<feature type="helix" evidence="2">
    <location>
        <begin position="227"/>
        <end position="232"/>
    </location>
</feature>
<feature type="turn" evidence="2">
    <location>
        <begin position="233"/>
        <end position="235"/>
    </location>
</feature>
<feature type="helix" evidence="2">
    <location>
        <begin position="242"/>
        <end position="257"/>
    </location>
</feature>
<feature type="helix" evidence="2">
    <location>
        <begin position="260"/>
        <end position="281"/>
    </location>
</feature>
<feature type="strand" evidence="2">
    <location>
        <begin position="282"/>
        <end position="286"/>
    </location>
</feature>
<feature type="helix" evidence="2">
    <location>
        <begin position="291"/>
        <end position="293"/>
    </location>
</feature>
<feature type="strand" evidence="2">
    <location>
        <begin position="296"/>
        <end position="305"/>
    </location>
</feature>
<feature type="helix" evidence="2">
    <location>
        <begin position="306"/>
        <end position="308"/>
    </location>
</feature>
<feature type="helix" evidence="2">
    <location>
        <begin position="309"/>
        <end position="318"/>
    </location>
</feature>
<feature type="turn" evidence="2">
    <location>
        <begin position="328"/>
        <end position="330"/>
    </location>
</feature>
<feature type="strand" evidence="2">
    <location>
        <begin position="332"/>
        <end position="336"/>
    </location>
</feature>
<feature type="helix" evidence="2">
    <location>
        <begin position="343"/>
        <end position="359"/>
    </location>
</feature>
<name>SERC_PSEAE</name>
<proteinExistence type="evidence at protein level"/>
<protein>
    <recommendedName>
        <fullName evidence="1">Phosphoserine aminotransferase</fullName>
        <ecNumber evidence="1">2.6.1.52</ecNumber>
    </recommendedName>
    <alternativeName>
        <fullName evidence="1">Phosphohydroxythreonine aminotransferase</fullName>
        <shortName evidence="1">PSAT</shortName>
    </alternativeName>
</protein>
<gene>
    <name evidence="1" type="primary">serC</name>
    <name type="ordered locus">PA3167</name>
</gene>